<dbReference type="EMBL" id="CP000235">
    <property type="protein sequence ID" value="ABD44241.1"/>
    <property type="molecule type" value="Genomic_DNA"/>
</dbReference>
<dbReference type="RefSeq" id="WP_011450450.1">
    <property type="nucleotide sequence ID" value="NC_007797.1"/>
</dbReference>
<dbReference type="SMR" id="Q2GL24"/>
<dbReference type="STRING" id="212042.APH_0315"/>
<dbReference type="PaxDb" id="212042-APH_0315"/>
<dbReference type="EnsemblBacteria" id="ABD44241">
    <property type="protein sequence ID" value="ABD44241"/>
    <property type="gene ID" value="APH_0315"/>
</dbReference>
<dbReference type="GeneID" id="92747490"/>
<dbReference type="KEGG" id="aph:APH_0315"/>
<dbReference type="eggNOG" id="COG0333">
    <property type="taxonomic scope" value="Bacteria"/>
</dbReference>
<dbReference type="HOGENOM" id="CLU_129084_2_0_5"/>
<dbReference type="Proteomes" id="UP000001943">
    <property type="component" value="Chromosome"/>
</dbReference>
<dbReference type="GO" id="GO:0015934">
    <property type="term" value="C:large ribosomal subunit"/>
    <property type="evidence" value="ECO:0007669"/>
    <property type="project" value="InterPro"/>
</dbReference>
<dbReference type="GO" id="GO:0003735">
    <property type="term" value="F:structural constituent of ribosome"/>
    <property type="evidence" value="ECO:0007669"/>
    <property type="project" value="InterPro"/>
</dbReference>
<dbReference type="GO" id="GO:0006412">
    <property type="term" value="P:translation"/>
    <property type="evidence" value="ECO:0007669"/>
    <property type="project" value="UniProtKB-UniRule"/>
</dbReference>
<dbReference type="Gene3D" id="1.20.5.640">
    <property type="entry name" value="Single helix bin"/>
    <property type="match status" value="1"/>
</dbReference>
<dbReference type="HAMAP" id="MF_00340">
    <property type="entry name" value="Ribosomal_bL32"/>
    <property type="match status" value="1"/>
</dbReference>
<dbReference type="InterPro" id="IPR002677">
    <property type="entry name" value="Ribosomal_bL32"/>
</dbReference>
<dbReference type="InterPro" id="IPR044957">
    <property type="entry name" value="Ribosomal_bL32_bact"/>
</dbReference>
<dbReference type="InterPro" id="IPR011332">
    <property type="entry name" value="Ribosomal_zn-bd"/>
</dbReference>
<dbReference type="NCBIfam" id="TIGR01031">
    <property type="entry name" value="rpmF_bact"/>
    <property type="match status" value="1"/>
</dbReference>
<dbReference type="PANTHER" id="PTHR35534">
    <property type="entry name" value="50S RIBOSOMAL PROTEIN L32"/>
    <property type="match status" value="1"/>
</dbReference>
<dbReference type="PANTHER" id="PTHR35534:SF1">
    <property type="entry name" value="LARGE RIBOSOMAL SUBUNIT PROTEIN BL32"/>
    <property type="match status" value="1"/>
</dbReference>
<dbReference type="Pfam" id="PF01783">
    <property type="entry name" value="Ribosomal_L32p"/>
    <property type="match status" value="1"/>
</dbReference>
<dbReference type="SUPFAM" id="SSF57829">
    <property type="entry name" value="Zn-binding ribosomal proteins"/>
    <property type="match status" value="1"/>
</dbReference>
<comment type="similarity">
    <text evidence="1">Belongs to the bacterial ribosomal protein bL32 family.</text>
</comment>
<feature type="chain" id="PRO_0000296420" description="Large ribosomal subunit protein bL32">
    <location>
        <begin position="1"/>
        <end position="58"/>
    </location>
</feature>
<accession>Q2GL24</accession>
<organism>
    <name type="scientific">Anaplasma phagocytophilum (strain HZ)</name>
    <dbReference type="NCBI Taxonomy" id="212042"/>
    <lineage>
        <taxon>Bacteria</taxon>
        <taxon>Pseudomonadati</taxon>
        <taxon>Pseudomonadota</taxon>
        <taxon>Alphaproteobacteria</taxon>
        <taxon>Rickettsiales</taxon>
        <taxon>Anaplasmataceae</taxon>
        <taxon>Anaplasma</taxon>
        <taxon>phagocytophilum group</taxon>
    </lineage>
</organism>
<name>RL32_ANAPZ</name>
<protein>
    <recommendedName>
        <fullName evidence="1">Large ribosomal subunit protein bL32</fullName>
    </recommendedName>
    <alternativeName>
        <fullName evidence="2">50S ribosomal protein L32</fullName>
    </alternativeName>
</protein>
<sequence length="58" mass="6474">MAVPKRKKSKSRRNMHRSHLGLVAPNVVIDPTTGEYKLSHHVCLGGYYNGKQVAKSKV</sequence>
<reference key="1">
    <citation type="journal article" date="2006" name="PLoS Genet.">
        <title>Comparative genomics of emerging human ehrlichiosis agents.</title>
        <authorList>
            <person name="Dunning Hotopp J.C."/>
            <person name="Lin M."/>
            <person name="Madupu R."/>
            <person name="Crabtree J."/>
            <person name="Angiuoli S.V."/>
            <person name="Eisen J.A."/>
            <person name="Seshadri R."/>
            <person name="Ren Q."/>
            <person name="Wu M."/>
            <person name="Utterback T.R."/>
            <person name="Smith S."/>
            <person name="Lewis M."/>
            <person name="Khouri H."/>
            <person name="Zhang C."/>
            <person name="Niu H."/>
            <person name="Lin Q."/>
            <person name="Ohashi N."/>
            <person name="Zhi N."/>
            <person name="Nelson W.C."/>
            <person name="Brinkac L.M."/>
            <person name="Dodson R.J."/>
            <person name="Rosovitz M.J."/>
            <person name="Sundaram J.P."/>
            <person name="Daugherty S.C."/>
            <person name="Davidsen T."/>
            <person name="Durkin A.S."/>
            <person name="Gwinn M.L."/>
            <person name="Haft D.H."/>
            <person name="Selengut J.D."/>
            <person name="Sullivan S.A."/>
            <person name="Zafar N."/>
            <person name="Zhou L."/>
            <person name="Benahmed F."/>
            <person name="Forberger H."/>
            <person name="Halpin R."/>
            <person name="Mulligan S."/>
            <person name="Robinson J."/>
            <person name="White O."/>
            <person name="Rikihisa Y."/>
            <person name="Tettelin H."/>
        </authorList>
    </citation>
    <scope>NUCLEOTIDE SEQUENCE [LARGE SCALE GENOMIC DNA]</scope>
    <source>
        <strain>HZ</strain>
    </source>
</reference>
<proteinExistence type="inferred from homology"/>
<gene>
    <name evidence="1" type="primary">rpmF</name>
    <name type="ordered locus">APH_0315</name>
</gene>
<evidence type="ECO:0000255" key="1">
    <source>
        <dbReference type="HAMAP-Rule" id="MF_00340"/>
    </source>
</evidence>
<evidence type="ECO:0000305" key="2"/>
<keyword id="KW-0687">Ribonucleoprotein</keyword>
<keyword id="KW-0689">Ribosomal protein</keyword>